<evidence type="ECO:0000250" key="1"/>
<evidence type="ECO:0000255" key="2"/>
<evidence type="ECO:0000305" key="3"/>
<reference key="1">
    <citation type="journal article" date="2004" name="Nature">
        <title>Genome evolution in yeasts.</title>
        <authorList>
            <person name="Dujon B."/>
            <person name="Sherman D."/>
            <person name="Fischer G."/>
            <person name="Durrens P."/>
            <person name="Casaregola S."/>
            <person name="Lafontaine I."/>
            <person name="de Montigny J."/>
            <person name="Marck C."/>
            <person name="Neuveglise C."/>
            <person name="Talla E."/>
            <person name="Goffard N."/>
            <person name="Frangeul L."/>
            <person name="Aigle M."/>
            <person name="Anthouard V."/>
            <person name="Babour A."/>
            <person name="Barbe V."/>
            <person name="Barnay S."/>
            <person name="Blanchin S."/>
            <person name="Beckerich J.-M."/>
            <person name="Beyne E."/>
            <person name="Bleykasten C."/>
            <person name="Boisrame A."/>
            <person name="Boyer J."/>
            <person name="Cattolico L."/>
            <person name="Confanioleri F."/>
            <person name="de Daruvar A."/>
            <person name="Despons L."/>
            <person name="Fabre E."/>
            <person name="Fairhead C."/>
            <person name="Ferry-Dumazet H."/>
            <person name="Groppi A."/>
            <person name="Hantraye F."/>
            <person name="Hennequin C."/>
            <person name="Jauniaux N."/>
            <person name="Joyet P."/>
            <person name="Kachouri R."/>
            <person name="Kerrest A."/>
            <person name="Koszul R."/>
            <person name="Lemaire M."/>
            <person name="Lesur I."/>
            <person name="Ma L."/>
            <person name="Muller H."/>
            <person name="Nicaud J.-M."/>
            <person name="Nikolski M."/>
            <person name="Oztas S."/>
            <person name="Ozier-Kalogeropoulos O."/>
            <person name="Pellenz S."/>
            <person name="Potier S."/>
            <person name="Richard G.-F."/>
            <person name="Straub M.-L."/>
            <person name="Suleau A."/>
            <person name="Swennen D."/>
            <person name="Tekaia F."/>
            <person name="Wesolowski-Louvel M."/>
            <person name="Westhof E."/>
            <person name="Wirth B."/>
            <person name="Zeniou-Meyer M."/>
            <person name="Zivanovic Y."/>
            <person name="Bolotin-Fukuhara M."/>
            <person name="Thierry A."/>
            <person name="Bouchier C."/>
            <person name="Caudron B."/>
            <person name="Scarpelli C."/>
            <person name="Gaillardin C."/>
            <person name="Weissenbach J."/>
            <person name="Wincker P."/>
            <person name="Souciet J.-L."/>
        </authorList>
    </citation>
    <scope>NUCLEOTIDE SEQUENCE [LARGE SCALE GENOMIC DNA]</scope>
    <source>
        <strain>ATCC 2001 / BCRC 20586 / JCM 3761 / NBRC 0622 / NRRL Y-65 / CBS 138</strain>
    </source>
</reference>
<feature type="chain" id="PRO_0000086895" description="Chromatin modification-related protein EAF6">
    <location>
        <begin position="1"/>
        <end position="91"/>
    </location>
</feature>
<feature type="coiled-coil region" evidence="2">
    <location>
        <begin position="1"/>
        <end position="43"/>
    </location>
</feature>
<comment type="function">
    <text evidence="1">Component of the NuA4 histone acetyltransferase complex which is involved in transcriptional activation of selected genes principally by acetylation of nucleosomal histone H4 and H2A. The NuA4 complex is also involved in DNA repair (By similarity).</text>
</comment>
<comment type="subunit">
    <text evidence="1">Component of the NuA4 histone acetyltransferase complex.</text>
</comment>
<comment type="subcellular location">
    <subcellularLocation>
        <location evidence="1">Nucleus</location>
    </subcellularLocation>
</comment>
<comment type="similarity">
    <text evidence="3">Belongs to the EAF6 family.</text>
</comment>
<protein>
    <recommendedName>
        <fullName>Chromatin modification-related protein EAF6</fullName>
    </recommendedName>
</protein>
<dbReference type="EMBL" id="CR380959">
    <property type="protein sequence ID" value="CAG62726.1"/>
    <property type="molecule type" value="Genomic_DNA"/>
</dbReference>
<dbReference type="RefSeq" id="XP_449748.1">
    <property type="nucleotide sequence ID" value="XM_449748.1"/>
</dbReference>
<dbReference type="SMR" id="Q6FJ46"/>
<dbReference type="FunCoup" id="Q6FJ46">
    <property type="interactions" value="129"/>
</dbReference>
<dbReference type="STRING" id="284593.Q6FJ46"/>
<dbReference type="EnsemblFungi" id="CAGL0M09295g-T">
    <property type="protein sequence ID" value="CAGL0M09295g-T-p1"/>
    <property type="gene ID" value="CAGL0M09295g"/>
</dbReference>
<dbReference type="KEGG" id="cgr:2891312"/>
<dbReference type="CGD" id="CAL0136263">
    <property type="gene designation" value="CAGL0M09295g"/>
</dbReference>
<dbReference type="VEuPathDB" id="FungiDB:B1J91_M09295g"/>
<dbReference type="VEuPathDB" id="FungiDB:CAGL0M09295g"/>
<dbReference type="eggNOG" id="KOG3856">
    <property type="taxonomic scope" value="Eukaryota"/>
</dbReference>
<dbReference type="HOGENOM" id="CLU_093901_2_1_1"/>
<dbReference type="InParanoid" id="Q6FJ46"/>
<dbReference type="OMA" id="FVKQQEG"/>
<dbReference type="Proteomes" id="UP000002428">
    <property type="component" value="Chromosome M"/>
</dbReference>
<dbReference type="GO" id="GO:1990467">
    <property type="term" value="C:NuA3a histone acetyltransferase complex"/>
    <property type="evidence" value="ECO:0007669"/>
    <property type="project" value="EnsemblFungi"/>
</dbReference>
<dbReference type="GO" id="GO:1990468">
    <property type="term" value="C:NuA3b histone acetyltransferase complex"/>
    <property type="evidence" value="ECO:0007669"/>
    <property type="project" value="EnsemblFungi"/>
</dbReference>
<dbReference type="GO" id="GO:0035267">
    <property type="term" value="C:NuA4 histone acetyltransferase complex"/>
    <property type="evidence" value="ECO:0007669"/>
    <property type="project" value="EnsemblFungi"/>
</dbReference>
<dbReference type="GO" id="GO:0005634">
    <property type="term" value="C:nucleus"/>
    <property type="evidence" value="ECO:0007669"/>
    <property type="project" value="UniProtKB-SubCell"/>
</dbReference>
<dbReference type="GO" id="GO:0006325">
    <property type="term" value="P:chromatin organization"/>
    <property type="evidence" value="ECO:0007669"/>
    <property type="project" value="UniProtKB-KW"/>
</dbReference>
<dbReference type="GO" id="GO:0006281">
    <property type="term" value="P:DNA repair"/>
    <property type="evidence" value="ECO:0007669"/>
    <property type="project" value="UniProtKB-KW"/>
</dbReference>
<dbReference type="InterPro" id="IPR015418">
    <property type="entry name" value="Eaf6"/>
</dbReference>
<dbReference type="PANTHER" id="PTHR13476">
    <property type="entry name" value="CHROMATIN MODIFICATION-RELATED PROTEIN MEAF6"/>
    <property type="match status" value="1"/>
</dbReference>
<dbReference type="Pfam" id="PF09340">
    <property type="entry name" value="NuA4"/>
    <property type="match status" value="1"/>
</dbReference>
<sequence length="91" mass="10551">MSDEYQSVKQELKALLADRKELEDKLDKLQQEIYDKESEYFDVDGGSKSYHNILRGFDGMSRTQSNNSNMTNNDRIFSLSSASYVKQVQDQ</sequence>
<accession>Q6FJ46</accession>
<name>EAF6_CANGA</name>
<proteinExistence type="inferred from homology"/>
<gene>
    <name type="primary">EAF6</name>
    <name type="ordered locus">CAGL0M09295g</name>
</gene>
<keyword id="KW-0156">Chromatin regulator</keyword>
<keyword id="KW-0175">Coiled coil</keyword>
<keyword id="KW-0227">DNA damage</keyword>
<keyword id="KW-0234">DNA repair</keyword>
<keyword id="KW-0539">Nucleus</keyword>
<keyword id="KW-1185">Reference proteome</keyword>
<keyword id="KW-0804">Transcription</keyword>
<keyword id="KW-0805">Transcription regulation</keyword>
<organism>
    <name type="scientific">Candida glabrata (strain ATCC 2001 / BCRC 20586 / JCM 3761 / NBRC 0622 / NRRL Y-65 / CBS 138)</name>
    <name type="common">Yeast</name>
    <name type="synonym">Nakaseomyces glabratus</name>
    <dbReference type="NCBI Taxonomy" id="284593"/>
    <lineage>
        <taxon>Eukaryota</taxon>
        <taxon>Fungi</taxon>
        <taxon>Dikarya</taxon>
        <taxon>Ascomycota</taxon>
        <taxon>Saccharomycotina</taxon>
        <taxon>Saccharomycetes</taxon>
        <taxon>Saccharomycetales</taxon>
        <taxon>Saccharomycetaceae</taxon>
        <taxon>Nakaseomyces</taxon>
    </lineage>
</organism>